<name>OPS4_CANAW</name>
<sequence length="402" mass="41328">MKFSQATILAIFASSALVSAAPANIVSEQTMVKREDVNAIVELINEIKHINQKRDLAEGEDLLELQRRADSVIGELVSALYNSGVIGLVWDKLTTDPSISSSLSNIIKSAIQGAIVQGGALIQAVWNSGLLGDVFNKLINDTDLRQALLDVGKALFNSAANLISIWLGGSSSSSSAAPAAAAAPATNGASKREIMEAAEYLSERDLASILSWIVQTIKDTGIVQSLVNQVINNPDTVISFLTSALKNGLVIVEDLYDWAKQSGLWDQALVYIQNNAGSWIKALAGLFGNALSNGTITASDINNAGSSSKPTGTTTASTATAAPKAATPAAASAAAPKAATSGSSSGSSSNNADLNALINKYGGGSGSTSTPTVDTSGLSSDVNTLVNAAGQAASSLKKRKLY</sequence>
<organism>
    <name type="scientific">Candida albicans (strain WO-1)</name>
    <name type="common">Yeast</name>
    <dbReference type="NCBI Taxonomy" id="294748"/>
    <lineage>
        <taxon>Eukaryota</taxon>
        <taxon>Fungi</taxon>
        <taxon>Dikarya</taxon>
        <taxon>Ascomycota</taxon>
        <taxon>Saccharomycotina</taxon>
        <taxon>Pichiomycetes</taxon>
        <taxon>Debaryomycetaceae</taxon>
        <taxon>Candida/Lodderomyces clade</taxon>
        <taxon>Candida</taxon>
    </lineage>
</organism>
<protein>
    <recommendedName>
        <fullName>Opaque-phase-specific protein OP4</fullName>
    </recommendedName>
</protein>
<proteinExistence type="inferred from homology"/>
<reference key="1">
    <citation type="journal article" date="1993" name="Infect. Immun.">
        <title>Coordinate regulation of two opaque-phase-specific genes during white-opaque switching in Candida albicans.</title>
        <authorList>
            <person name="Morrow B."/>
            <person name="Srikantha T."/>
            <person name="Anderson J."/>
            <person name="Soll D.R."/>
        </authorList>
    </citation>
    <scope>NUCLEOTIDE SEQUENCE [GENOMIC DNA]</scope>
    <source>
        <strain>WO-1</strain>
    </source>
</reference>
<reference key="2">
    <citation type="journal article" date="2009" name="Nature">
        <title>Evolution of pathogenicity and sexual reproduction in eight Candida genomes.</title>
        <authorList>
            <person name="Butler G."/>
            <person name="Rasmussen M.D."/>
            <person name="Lin M.F."/>
            <person name="Santos M.A.S."/>
            <person name="Sakthikumar S."/>
            <person name="Munro C.A."/>
            <person name="Rheinbay E."/>
            <person name="Grabherr M."/>
            <person name="Forche A."/>
            <person name="Reedy J.L."/>
            <person name="Agrafioti I."/>
            <person name="Arnaud M.B."/>
            <person name="Bates S."/>
            <person name="Brown A.J.P."/>
            <person name="Brunke S."/>
            <person name="Costanzo M.C."/>
            <person name="Fitzpatrick D.A."/>
            <person name="de Groot P.W.J."/>
            <person name="Harris D."/>
            <person name="Hoyer L.L."/>
            <person name="Hube B."/>
            <person name="Klis F.M."/>
            <person name="Kodira C."/>
            <person name="Lennard N."/>
            <person name="Logue M.E."/>
            <person name="Martin R."/>
            <person name="Neiman A.M."/>
            <person name="Nikolaou E."/>
            <person name="Quail M.A."/>
            <person name="Quinn J."/>
            <person name="Santos M.C."/>
            <person name="Schmitzberger F.F."/>
            <person name="Sherlock G."/>
            <person name="Shah P."/>
            <person name="Silverstein K.A.T."/>
            <person name="Skrzypek M.S."/>
            <person name="Soll D."/>
            <person name="Staggs R."/>
            <person name="Stansfield I."/>
            <person name="Stumpf M.P.H."/>
            <person name="Sudbery P.E."/>
            <person name="Srikantha T."/>
            <person name="Zeng Q."/>
            <person name="Berman J."/>
            <person name="Berriman M."/>
            <person name="Heitman J."/>
            <person name="Gow N.A.R."/>
            <person name="Lorenz M.C."/>
            <person name="Birren B.W."/>
            <person name="Kellis M."/>
            <person name="Cuomo C.A."/>
        </authorList>
    </citation>
    <scope>NUCLEOTIDE SEQUENCE [LARGE SCALE GENOMIC DNA]</scope>
    <source>
        <strain>WO-1</strain>
    </source>
</reference>
<evidence type="ECO:0000255" key="1"/>
<evidence type="ECO:0000256" key="2">
    <source>
        <dbReference type="SAM" id="MobiDB-lite"/>
    </source>
</evidence>
<evidence type="ECO:0000305" key="3"/>
<keyword id="KW-0325">Glycoprotein</keyword>
<keyword id="KW-0732">Signal</keyword>
<dbReference type="EMBL" id="L10735">
    <property type="status" value="NOT_ANNOTATED_CDS"/>
    <property type="molecule type" value="Genomic_DNA"/>
</dbReference>
<dbReference type="EMBL" id="CH672346">
    <property type="protein sequence ID" value="EEQ41948.1"/>
    <property type="molecule type" value="Genomic_DNA"/>
</dbReference>
<dbReference type="GlyCosmos" id="P46596">
    <property type="glycosylation" value="2 sites, No reported glycans"/>
</dbReference>
<dbReference type="PaxDb" id="5476-P46596"/>
<dbReference type="VEuPathDB" id="FungiDB:CAWG_00140"/>
<dbReference type="HOGENOM" id="CLU_059574_0_0_1"/>
<dbReference type="OMA" id="WDSALSY"/>
<dbReference type="OrthoDB" id="26317at766764"/>
<dbReference type="Proteomes" id="UP000001429">
    <property type="component" value="Chromosome 1, Supercontig 1.1"/>
</dbReference>
<feature type="signal peptide" evidence="1">
    <location>
        <begin position="1"/>
        <end position="20"/>
    </location>
</feature>
<feature type="chain" id="PRO_0000021917" description="Opaque-phase-specific protein OP4">
    <location>
        <begin position="21"/>
        <end position="402"/>
    </location>
</feature>
<feature type="region of interest" description="Disordered" evidence="2">
    <location>
        <begin position="302"/>
        <end position="322"/>
    </location>
</feature>
<feature type="compositionally biased region" description="Low complexity" evidence="2">
    <location>
        <begin position="304"/>
        <end position="322"/>
    </location>
</feature>
<feature type="glycosylation site" description="N-linked (GlcNAc...) asparagine" evidence="1">
    <location>
        <position position="140"/>
    </location>
</feature>
<feature type="glycosylation site" description="N-linked (GlcNAc...) asparagine" evidence="1">
    <location>
        <position position="293"/>
    </location>
</feature>
<feature type="sequence conflict" description="In Ref. 1; L10735." evidence="3" ref="1">
    <original>D</original>
    <variation>V</variation>
    <location>
        <position position="96"/>
    </location>
</feature>
<feature type="sequence conflict" description="In Ref. 1; L10735." evidence="3" ref="1">
    <original>S</original>
    <variation>D</variation>
    <location>
        <position position="101"/>
    </location>
</feature>
<accession>P46596</accession>
<accession>C4YG24</accession>
<gene>
    <name type="primary">OPS4</name>
    <name type="ORF">CAWG_00140</name>
</gene>